<comment type="function">
    <text evidence="1">Methylates ribosomal protein L11.</text>
</comment>
<comment type="catalytic activity">
    <reaction evidence="1">
        <text>L-lysyl-[protein] + 3 S-adenosyl-L-methionine = N(6),N(6),N(6)-trimethyl-L-lysyl-[protein] + 3 S-adenosyl-L-homocysteine + 3 H(+)</text>
        <dbReference type="Rhea" id="RHEA:54192"/>
        <dbReference type="Rhea" id="RHEA-COMP:9752"/>
        <dbReference type="Rhea" id="RHEA-COMP:13826"/>
        <dbReference type="ChEBI" id="CHEBI:15378"/>
        <dbReference type="ChEBI" id="CHEBI:29969"/>
        <dbReference type="ChEBI" id="CHEBI:57856"/>
        <dbReference type="ChEBI" id="CHEBI:59789"/>
        <dbReference type="ChEBI" id="CHEBI:61961"/>
    </reaction>
</comment>
<comment type="subcellular location">
    <subcellularLocation>
        <location evidence="1">Cytoplasm</location>
    </subcellularLocation>
</comment>
<comment type="similarity">
    <text evidence="1">Belongs to the methyltransferase superfamily. PrmA family.</text>
</comment>
<accession>B5F7P3</accession>
<reference key="1">
    <citation type="journal article" date="2011" name="J. Bacteriol.">
        <title>Comparative genomics of 28 Salmonella enterica isolates: evidence for CRISPR-mediated adaptive sublineage evolution.</title>
        <authorList>
            <person name="Fricke W.F."/>
            <person name="Mammel M.K."/>
            <person name="McDermott P.F."/>
            <person name="Tartera C."/>
            <person name="White D.G."/>
            <person name="Leclerc J.E."/>
            <person name="Ravel J."/>
            <person name="Cebula T.A."/>
        </authorList>
    </citation>
    <scope>NUCLEOTIDE SEQUENCE [LARGE SCALE GENOMIC DNA]</scope>
    <source>
        <strain>SL483</strain>
    </source>
</reference>
<proteinExistence type="inferred from homology"/>
<organism>
    <name type="scientific">Salmonella agona (strain SL483)</name>
    <dbReference type="NCBI Taxonomy" id="454166"/>
    <lineage>
        <taxon>Bacteria</taxon>
        <taxon>Pseudomonadati</taxon>
        <taxon>Pseudomonadota</taxon>
        <taxon>Gammaproteobacteria</taxon>
        <taxon>Enterobacterales</taxon>
        <taxon>Enterobacteriaceae</taxon>
        <taxon>Salmonella</taxon>
    </lineage>
</organism>
<evidence type="ECO:0000255" key="1">
    <source>
        <dbReference type="HAMAP-Rule" id="MF_00735"/>
    </source>
</evidence>
<sequence>MPWIQLKLNTTGANAEELSDALMEAGAVSITFQDTHDTPVFEPLPGETRLWGDTDVIGLFDAETDMKDVVAILEQHPLLGAGFAHKIEQLEDKDWEREWMDNFHPMRFGERLWICPSWRDIPDENAVNVMLDPGLAFGTGTHPTTSLCLQWLDGLDLNGKTVIDFGCGSGILAIAALKLGAAKAIGIDIDPQAIQASRDNAERNGVSDRLELYLPKDQPEAMKADVVVANILAGPLRELAPLISVLPVEGGLLGLSGILASQAESVCDAYAELFTLDPVVEKEEWCRITGRKK</sequence>
<gene>
    <name evidence="1" type="primary">prmA</name>
    <name type="ordered locus">SeAg_B3574</name>
</gene>
<protein>
    <recommendedName>
        <fullName evidence="1">Ribosomal protein L11 methyltransferase</fullName>
        <shortName evidence="1">L11 Mtase</shortName>
        <ecNumber evidence="1">2.1.1.-</ecNumber>
    </recommendedName>
</protein>
<dbReference type="EC" id="2.1.1.-" evidence="1"/>
<dbReference type="EMBL" id="CP001138">
    <property type="protein sequence ID" value="ACH52556.1"/>
    <property type="molecule type" value="Genomic_DNA"/>
</dbReference>
<dbReference type="RefSeq" id="WP_001145849.1">
    <property type="nucleotide sequence ID" value="NC_011149.1"/>
</dbReference>
<dbReference type="SMR" id="B5F7P3"/>
<dbReference type="KEGG" id="sea:SeAg_B3574"/>
<dbReference type="HOGENOM" id="CLU_049382_4_1_6"/>
<dbReference type="Proteomes" id="UP000008819">
    <property type="component" value="Chromosome"/>
</dbReference>
<dbReference type="GO" id="GO:0005829">
    <property type="term" value="C:cytosol"/>
    <property type="evidence" value="ECO:0007669"/>
    <property type="project" value="TreeGrafter"/>
</dbReference>
<dbReference type="GO" id="GO:0016279">
    <property type="term" value="F:protein-lysine N-methyltransferase activity"/>
    <property type="evidence" value="ECO:0007669"/>
    <property type="project" value="TreeGrafter"/>
</dbReference>
<dbReference type="GO" id="GO:0032259">
    <property type="term" value="P:methylation"/>
    <property type="evidence" value="ECO:0007669"/>
    <property type="project" value="UniProtKB-KW"/>
</dbReference>
<dbReference type="CDD" id="cd02440">
    <property type="entry name" value="AdoMet_MTases"/>
    <property type="match status" value="1"/>
</dbReference>
<dbReference type="FunFam" id="3.40.50.150:FF:000021">
    <property type="entry name" value="Ribosomal protein L11 methyltransferase"/>
    <property type="match status" value="1"/>
</dbReference>
<dbReference type="Gene3D" id="3.40.50.150">
    <property type="entry name" value="Vaccinia Virus protein VP39"/>
    <property type="match status" value="1"/>
</dbReference>
<dbReference type="HAMAP" id="MF_00735">
    <property type="entry name" value="Methyltr_PrmA"/>
    <property type="match status" value="1"/>
</dbReference>
<dbReference type="InterPro" id="IPR050078">
    <property type="entry name" value="Ribosomal_L11_MeTrfase_PrmA"/>
</dbReference>
<dbReference type="InterPro" id="IPR004498">
    <property type="entry name" value="Ribosomal_PrmA_MeTrfase"/>
</dbReference>
<dbReference type="InterPro" id="IPR029063">
    <property type="entry name" value="SAM-dependent_MTases_sf"/>
</dbReference>
<dbReference type="NCBIfam" id="TIGR00406">
    <property type="entry name" value="prmA"/>
    <property type="match status" value="1"/>
</dbReference>
<dbReference type="PANTHER" id="PTHR43648">
    <property type="entry name" value="ELECTRON TRANSFER FLAVOPROTEIN BETA SUBUNIT LYSINE METHYLTRANSFERASE"/>
    <property type="match status" value="1"/>
</dbReference>
<dbReference type="PANTHER" id="PTHR43648:SF1">
    <property type="entry name" value="ELECTRON TRANSFER FLAVOPROTEIN BETA SUBUNIT LYSINE METHYLTRANSFERASE"/>
    <property type="match status" value="1"/>
</dbReference>
<dbReference type="Pfam" id="PF06325">
    <property type="entry name" value="PrmA"/>
    <property type="match status" value="1"/>
</dbReference>
<dbReference type="PIRSF" id="PIRSF000401">
    <property type="entry name" value="RPL11_MTase"/>
    <property type="match status" value="1"/>
</dbReference>
<dbReference type="SUPFAM" id="SSF53335">
    <property type="entry name" value="S-adenosyl-L-methionine-dependent methyltransferases"/>
    <property type="match status" value="1"/>
</dbReference>
<feature type="chain" id="PRO_1000192656" description="Ribosomal protein L11 methyltransferase">
    <location>
        <begin position="1"/>
        <end position="293"/>
    </location>
</feature>
<feature type="binding site" evidence="1">
    <location>
        <position position="145"/>
    </location>
    <ligand>
        <name>S-adenosyl-L-methionine</name>
        <dbReference type="ChEBI" id="CHEBI:59789"/>
    </ligand>
</feature>
<feature type="binding site" evidence="1">
    <location>
        <position position="166"/>
    </location>
    <ligand>
        <name>S-adenosyl-L-methionine</name>
        <dbReference type="ChEBI" id="CHEBI:59789"/>
    </ligand>
</feature>
<feature type="binding site" evidence="1">
    <location>
        <position position="188"/>
    </location>
    <ligand>
        <name>S-adenosyl-L-methionine</name>
        <dbReference type="ChEBI" id="CHEBI:59789"/>
    </ligand>
</feature>
<feature type="binding site" evidence="1">
    <location>
        <position position="230"/>
    </location>
    <ligand>
        <name>S-adenosyl-L-methionine</name>
        <dbReference type="ChEBI" id="CHEBI:59789"/>
    </ligand>
</feature>
<keyword id="KW-0963">Cytoplasm</keyword>
<keyword id="KW-0489">Methyltransferase</keyword>
<keyword id="KW-0949">S-adenosyl-L-methionine</keyword>
<keyword id="KW-0808">Transferase</keyword>
<name>PRMA_SALA4</name>